<proteinExistence type="inferred from homology"/>
<comment type="function">
    <text evidence="1">Catalyzes the formation of S-adenosylmethionine (AdoMet) from methionine and ATP. The overall synthetic reaction is composed of two sequential steps, AdoMet formation and the subsequent tripolyphosphate hydrolysis which occurs prior to release of AdoMet from the enzyme.</text>
</comment>
<comment type="catalytic activity">
    <reaction evidence="1">
        <text>L-methionine + ATP + H2O = S-adenosyl-L-methionine + phosphate + diphosphate</text>
        <dbReference type="Rhea" id="RHEA:21080"/>
        <dbReference type="ChEBI" id="CHEBI:15377"/>
        <dbReference type="ChEBI" id="CHEBI:30616"/>
        <dbReference type="ChEBI" id="CHEBI:33019"/>
        <dbReference type="ChEBI" id="CHEBI:43474"/>
        <dbReference type="ChEBI" id="CHEBI:57844"/>
        <dbReference type="ChEBI" id="CHEBI:59789"/>
        <dbReference type="EC" id="2.5.1.6"/>
    </reaction>
</comment>
<comment type="cofactor">
    <cofactor evidence="1">
        <name>Mg(2+)</name>
        <dbReference type="ChEBI" id="CHEBI:18420"/>
    </cofactor>
    <text evidence="1">Binds 2 divalent ions per subunit.</text>
</comment>
<comment type="cofactor">
    <cofactor evidence="1">
        <name>K(+)</name>
        <dbReference type="ChEBI" id="CHEBI:29103"/>
    </cofactor>
    <text evidence="1">Binds 1 potassium ion per subunit.</text>
</comment>
<comment type="pathway">
    <text evidence="1">Amino-acid biosynthesis; S-adenosyl-L-methionine biosynthesis; S-adenosyl-L-methionine from L-methionine: step 1/1.</text>
</comment>
<comment type="subunit">
    <text evidence="1">Homotetramer; dimer of dimers.</text>
</comment>
<comment type="subcellular location">
    <subcellularLocation>
        <location evidence="1">Cytoplasm</location>
    </subcellularLocation>
</comment>
<comment type="similarity">
    <text evidence="1">Belongs to the AdoMet synthase family.</text>
</comment>
<dbReference type="EC" id="2.5.1.6" evidence="1"/>
<dbReference type="EMBL" id="AM260479">
    <property type="protein sequence ID" value="CAJ91382.1"/>
    <property type="molecule type" value="Genomic_DNA"/>
</dbReference>
<dbReference type="RefSeq" id="WP_010813318.1">
    <property type="nucleotide sequence ID" value="NZ_CP039287.1"/>
</dbReference>
<dbReference type="SMR" id="Q0KF39"/>
<dbReference type="STRING" id="381666.H16_A0230"/>
<dbReference type="KEGG" id="reh:H16_A0230"/>
<dbReference type="eggNOG" id="COG0192">
    <property type="taxonomic scope" value="Bacteria"/>
</dbReference>
<dbReference type="HOGENOM" id="CLU_041802_1_1_4"/>
<dbReference type="OrthoDB" id="9801686at2"/>
<dbReference type="UniPathway" id="UPA00315">
    <property type="reaction ID" value="UER00080"/>
</dbReference>
<dbReference type="Proteomes" id="UP000008210">
    <property type="component" value="Chromosome 1"/>
</dbReference>
<dbReference type="GO" id="GO:0005737">
    <property type="term" value="C:cytoplasm"/>
    <property type="evidence" value="ECO:0007669"/>
    <property type="project" value="UniProtKB-SubCell"/>
</dbReference>
<dbReference type="GO" id="GO:0005524">
    <property type="term" value="F:ATP binding"/>
    <property type="evidence" value="ECO:0007669"/>
    <property type="project" value="UniProtKB-UniRule"/>
</dbReference>
<dbReference type="GO" id="GO:0000287">
    <property type="term" value="F:magnesium ion binding"/>
    <property type="evidence" value="ECO:0007669"/>
    <property type="project" value="UniProtKB-UniRule"/>
</dbReference>
<dbReference type="GO" id="GO:0004478">
    <property type="term" value="F:methionine adenosyltransferase activity"/>
    <property type="evidence" value="ECO:0007669"/>
    <property type="project" value="UniProtKB-UniRule"/>
</dbReference>
<dbReference type="GO" id="GO:0006730">
    <property type="term" value="P:one-carbon metabolic process"/>
    <property type="evidence" value="ECO:0007669"/>
    <property type="project" value="UniProtKB-KW"/>
</dbReference>
<dbReference type="GO" id="GO:0006556">
    <property type="term" value="P:S-adenosylmethionine biosynthetic process"/>
    <property type="evidence" value="ECO:0007669"/>
    <property type="project" value="UniProtKB-UniRule"/>
</dbReference>
<dbReference type="CDD" id="cd18079">
    <property type="entry name" value="S-AdoMet_synt"/>
    <property type="match status" value="1"/>
</dbReference>
<dbReference type="FunFam" id="3.30.300.10:FF:000003">
    <property type="entry name" value="S-adenosylmethionine synthase"/>
    <property type="match status" value="1"/>
</dbReference>
<dbReference type="FunFam" id="3.30.300.10:FF:000004">
    <property type="entry name" value="S-adenosylmethionine synthase"/>
    <property type="match status" value="1"/>
</dbReference>
<dbReference type="Gene3D" id="3.30.300.10">
    <property type="match status" value="3"/>
</dbReference>
<dbReference type="HAMAP" id="MF_00086">
    <property type="entry name" value="S_AdoMet_synth1"/>
    <property type="match status" value="1"/>
</dbReference>
<dbReference type="InterPro" id="IPR022631">
    <property type="entry name" value="ADOMET_SYNTHASE_CS"/>
</dbReference>
<dbReference type="InterPro" id="IPR022630">
    <property type="entry name" value="S-AdoMet_synt_C"/>
</dbReference>
<dbReference type="InterPro" id="IPR022629">
    <property type="entry name" value="S-AdoMet_synt_central"/>
</dbReference>
<dbReference type="InterPro" id="IPR022628">
    <property type="entry name" value="S-AdoMet_synt_N"/>
</dbReference>
<dbReference type="InterPro" id="IPR002133">
    <property type="entry name" value="S-AdoMet_synthetase"/>
</dbReference>
<dbReference type="InterPro" id="IPR022636">
    <property type="entry name" value="S-AdoMet_synthetase_sfam"/>
</dbReference>
<dbReference type="NCBIfam" id="TIGR01034">
    <property type="entry name" value="metK"/>
    <property type="match status" value="1"/>
</dbReference>
<dbReference type="PANTHER" id="PTHR11964">
    <property type="entry name" value="S-ADENOSYLMETHIONINE SYNTHETASE"/>
    <property type="match status" value="1"/>
</dbReference>
<dbReference type="Pfam" id="PF02773">
    <property type="entry name" value="S-AdoMet_synt_C"/>
    <property type="match status" value="1"/>
</dbReference>
<dbReference type="Pfam" id="PF02772">
    <property type="entry name" value="S-AdoMet_synt_M"/>
    <property type="match status" value="1"/>
</dbReference>
<dbReference type="Pfam" id="PF00438">
    <property type="entry name" value="S-AdoMet_synt_N"/>
    <property type="match status" value="1"/>
</dbReference>
<dbReference type="PIRSF" id="PIRSF000497">
    <property type="entry name" value="MAT"/>
    <property type="match status" value="1"/>
</dbReference>
<dbReference type="SUPFAM" id="SSF55973">
    <property type="entry name" value="S-adenosylmethionine synthetase"/>
    <property type="match status" value="3"/>
</dbReference>
<dbReference type="PROSITE" id="PS00376">
    <property type="entry name" value="ADOMET_SYNTHASE_1"/>
    <property type="match status" value="1"/>
</dbReference>
<dbReference type="PROSITE" id="PS00377">
    <property type="entry name" value="ADOMET_SYNTHASE_2"/>
    <property type="match status" value="1"/>
</dbReference>
<protein>
    <recommendedName>
        <fullName evidence="1">S-adenosylmethionine synthase</fullName>
        <shortName evidence="1">AdoMet synthase</shortName>
        <ecNumber evidence="1">2.5.1.6</ecNumber>
    </recommendedName>
    <alternativeName>
        <fullName evidence="1">MAT</fullName>
    </alternativeName>
    <alternativeName>
        <fullName evidence="1">Methionine adenosyltransferase</fullName>
    </alternativeName>
</protein>
<accession>Q0KF39</accession>
<name>METK_CUPNH</name>
<organism>
    <name type="scientific">Cupriavidus necator (strain ATCC 17699 / DSM 428 / KCTC 22496 / NCIMB 10442 / H16 / Stanier 337)</name>
    <name type="common">Ralstonia eutropha</name>
    <dbReference type="NCBI Taxonomy" id="381666"/>
    <lineage>
        <taxon>Bacteria</taxon>
        <taxon>Pseudomonadati</taxon>
        <taxon>Pseudomonadota</taxon>
        <taxon>Betaproteobacteria</taxon>
        <taxon>Burkholderiales</taxon>
        <taxon>Burkholderiaceae</taxon>
        <taxon>Cupriavidus</taxon>
    </lineage>
</organism>
<evidence type="ECO:0000255" key="1">
    <source>
        <dbReference type="HAMAP-Rule" id="MF_00086"/>
    </source>
</evidence>
<reference key="1">
    <citation type="journal article" date="2006" name="Nat. Biotechnol.">
        <title>Genome sequence of the bioplastic-producing 'Knallgas' bacterium Ralstonia eutropha H16.</title>
        <authorList>
            <person name="Pohlmann A."/>
            <person name="Fricke W.F."/>
            <person name="Reinecke F."/>
            <person name="Kusian B."/>
            <person name="Liesegang H."/>
            <person name="Cramm R."/>
            <person name="Eitinger T."/>
            <person name="Ewering C."/>
            <person name="Poetter M."/>
            <person name="Schwartz E."/>
            <person name="Strittmatter A."/>
            <person name="Voss I."/>
            <person name="Gottschalk G."/>
            <person name="Steinbuechel A."/>
            <person name="Friedrich B."/>
            <person name="Bowien B."/>
        </authorList>
    </citation>
    <scope>NUCLEOTIDE SEQUENCE [LARGE SCALE GENOMIC DNA]</scope>
    <source>
        <strain>ATCC 17699 / DSM 428 / KCTC 22496 / NCIMB 10442 / H16 / Stanier 337</strain>
    </source>
</reference>
<feature type="chain" id="PRO_0000302968" description="S-adenosylmethionine synthase">
    <location>
        <begin position="1"/>
        <end position="387"/>
    </location>
</feature>
<feature type="region of interest" description="Flexible loop" evidence="1">
    <location>
        <begin position="100"/>
        <end position="110"/>
    </location>
</feature>
<feature type="binding site" description="in other chain" evidence="1">
    <location>
        <position position="16"/>
    </location>
    <ligand>
        <name>ATP</name>
        <dbReference type="ChEBI" id="CHEBI:30616"/>
        <note>ligand shared between two neighboring subunits</note>
    </ligand>
</feature>
<feature type="binding site" evidence="1">
    <location>
        <position position="18"/>
    </location>
    <ligand>
        <name>Mg(2+)</name>
        <dbReference type="ChEBI" id="CHEBI:18420"/>
    </ligand>
</feature>
<feature type="binding site" evidence="1">
    <location>
        <position position="44"/>
    </location>
    <ligand>
        <name>K(+)</name>
        <dbReference type="ChEBI" id="CHEBI:29103"/>
    </ligand>
</feature>
<feature type="binding site" description="in other chain" evidence="1">
    <location>
        <position position="57"/>
    </location>
    <ligand>
        <name>L-methionine</name>
        <dbReference type="ChEBI" id="CHEBI:57844"/>
        <note>ligand shared between two neighboring subunits</note>
    </ligand>
</feature>
<feature type="binding site" description="in other chain" evidence="1">
    <location>
        <position position="100"/>
    </location>
    <ligand>
        <name>L-methionine</name>
        <dbReference type="ChEBI" id="CHEBI:57844"/>
        <note>ligand shared between two neighboring subunits</note>
    </ligand>
</feature>
<feature type="binding site" description="in other chain" evidence="1">
    <location>
        <begin position="167"/>
        <end position="169"/>
    </location>
    <ligand>
        <name>ATP</name>
        <dbReference type="ChEBI" id="CHEBI:30616"/>
        <note>ligand shared between two neighboring subunits</note>
    </ligand>
</feature>
<feature type="binding site" description="in other chain" evidence="1">
    <location>
        <begin position="232"/>
        <end position="233"/>
    </location>
    <ligand>
        <name>ATP</name>
        <dbReference type="ChEBI" id="CHEBI:30616"/>
        <note>ligand shared between two neighboring subunits</note>
    </ligand>
</feature>
<feature type="binding site" evidence="1">
    <location>
        <position position="241"/>
    </location>
    <ligand>
        <name>ATP</name>
        <dbReference type="ChEBI" id="CHEBI:30616"/>
        <note>ligand shared between two neighboring subunits</note>
    </ligand>
</feature>
<feature type="binding site" evidence="1">
    <location>
        <position position="241"/>
    </location>
    <ligand>
        <name>L-methionine</name>
        <dbReference type="ChEBI" id="CHEBI:57844"/>
        <note>ligand shared between two neighboring subunits</note>
    </ligand>
</feature>
<feature type="binding site" description="in other chain" evidence="1">
    <location>
        <begin position="247"/>
        <end position="248"/>
    </location>
    <ligand>
        <name>ATP</name>
        <dbReference type="ChEBI" id="CHEBI:30616"/>
        <note>ligand shared between two neighboring subunits</note>
    </ligand>
</feature>
<feature type="binding site" evidence="1">
    <location>
        <position position="264"/>
    </location>
    <ligand>
        <name>ATP</name>
        <dbReference type="ChEBI" id="CHEBI:30616"/>
        <note>ligand shared between two neighboring subunits</note>
    </ligand>
</feature>
<feature type="binding site" evidence="1">
    <location>
        <position position="268"/>
    </location>
    <ligand>
        <name>ATP</name>
        <dbReference type="ChEBI" id="CHEBI:30616"/>
        <note>ligand shared between two neighboring subunits</note>
    </ligand>
</feature>
<feature type="binding site" description="in other chain" evidence="1">
    <location>
        <position position="272"/>
    </location>
    <ligand>
        <name>L-methionine</name>
        <dbReference type="ChEBI" id="CHEBI:57844"/>
        <note>ligand shared between two neighboring subunits</note>
    </ligand>
</feature>
<sequence>MANDFLFTSESVSEGHPDKVADQISDAVLDAILAQDKYARVAAETLCNTGLVVLAGEITTTANVDYIQIARDTIKRIGYDNTDYGIDYKGCAVLVAYDKQSPDIAQGVDRASDDYLNQGAGDQGLMFGYACDETPELMPFPIYYAHRLVERQSLLRRDGRLPWLRPDAKSQVTVRYVDGKPHSVDTVVLSTQHSPDITQAQIREAVIEEIIKPVLPAEMLKETKYLVNPTGRFVIGGPQGDCGLTGRKIIVDTYGGASPHGGGAFSGKDPSKVDRSAAYAARYVAKNVVASGLARQCQVQVSYAIGVARPINVTVYTEGTGKIPDAKIAELVQEHFDLRPKGIVQMLDLLRPIYEKTAAYGHFGREEPEFSWEATDKAAALRAAAGL</sequence>
<keyword id="KW-0067">ATP-binding</keyword>
<keyword id="KW-0963">Cytoplasm</keyword>
<keyword id="KW-0460">Magnesium</keyword>
<keyword id="KW-0479">Metal-binding</keyword>
<keyword id="KW-0547">Nucleotide-binding</keyword>
<keyword id="KW-0554">One-carbon metabolism</keyword>
<keyword id="KW-0630">Potassium</keyword>
<keyword id="KW-1185">Reference proteome</keyword>
<keyword id="KW-0808">Transferase</keyword>
<gene>
    <name evidence="1" type="primary">metK</name>
    <name type="ordered locus">H16_A0230</name>
</gene>